<accession>B5YHE5</accession>
<proteinExistence type="inferred from homology"/>
<reference key="1">
    <citation type="submission" date="2008-08" db="EMBL/GenBank/DDBJ databases">
        <title>The complete genome sequence of Thermodesulfovibrio yellowstonii strain ATCC 51303 / DSM 11347 / YP87.</title>
        <authorList>
            <person name="Dodson R.J."/>
            <person name="Durkin A.S."/>
            <person name="Wu M."/>
            <person name="Eisen J."/>
            <person name="Sutton G."/>
        </authorList>
    </citation>
    <scope>NUCLEOTIDE SEQUENCE [LARGE SCALE GENOMIC DNA]</scope>
    <source>
        <strain>ATCC 51303 / DSM 11347 / YP87</strain>
    </source>
</reference>
<protein>
    <recommendedName>
        <fullName evidence="1">3-isopropylmalate dehydratase small subunit</fullName>
        <ecNumber evidence="1">4.2.1.33</ecNumber>
    </recommendedName>
    <alternativeName>
        <fullName evidence="1">Alpha-IPM isomerase</fullName>
        <shortName evidence="1">IPMI</shortName>
    </alternativeName>
    <alternativeName>
        <fullName evidence="1">Isopropylmalate isomerase</fullName>
    </alternativeName>
</protein>
<keyword id="KW-0028">Amino-acid biosynthesis</keyword>
<keyword id="KW-0100">Branched-chain amino acid biosynthesis</keyword>
<keyword id="KW-0432">Leucine biosynthesis</keyword>
<keyword id="KW-0456">Lyase</keyword>
<keyword id="KW-1185">Reference proteome</keyword>
<organism>
    <name type="scientific">Thermodesulfovibrio yellowstonii (strain ATCC 51303 / DSM 11347 / YP87)</name>
    <dbReference type="NCBI Taxonomy" id="289376"/>
    <lineage>
        <taxon>Bacteria</taxon>
        <taxon>Pseudomonadati</taxon>
        <taxon>Nitrospirota</taxon>
        <taxon>Thermodesulfovibrionia</taxon>
        <taxon>Thermodesulfovibrionales</taxon>
        <taxon>Thermodesulfovibrionaceae</taxon>
        <taxon>Thermodesulfovibrio</taxon>
    </lineage>
</organism>
<evidence type="ECO:0000255" key="1">
    <source>
        <dbReference type="HAMAP-Rule" id="MF_01032"/>
    </source>
</evidence>
<feature type="chain" id="PRO_1000135852" description="3-isopropylmalate dehydratase small subunit">
    <location>
        <begin position="1"/>
        <end position="168"/>
    </location>
</feature>
<comment type="function">
    <text evidence="1">Catalyzes the isomerization between 2-isopropylmalate and 3-isopropylmalate, via the formation of 2-isopropylmaleate.</text>
</comment>
<comment type="catalytic activity">
    <reaction evidence="1">
        <text>(2R,3S)-3-isopropylmalate = (2S)-2-isopropylmalate</text>
        <dbReference type="Rhea" id="RHEA:32287"/>
        <dbReference type="ChEBI" id="CHEBI:1178"/>
        <dbReference type="ChEBI" id="CHEBI:35121"/>
        <dbReference type="EC" id="4.2.1.33"/>
    </reaction>
</comment>
<comment type="pathway">
    <text evidence="1">Amino-acid biosynthesis; L-leucine biosynthesis; L-leucine from 3-methyl-2-oxobutanoate: step 2/4.</text>
</comment>
<comment type="subunit">
    <text evidence="1">Heterodimer of LeuC and LeuD.</text>
</comment>
<comment type="similarity">
    <text evidence="1">Belongs to the LeuD family. LeuD type 2 subfamily.</text>
</comment>
<gene>
    <name evidence="1" type="primary">leuD</name>
    <name type="ordered locus">THEYE_A0115</name>
</gene>
<name>LEUD_THEYD</name>
<sequence length="168" mass="18680">MKIKGKVWKFGDNIDTDAIIPARYLNTSDPKELAKHVMEDADSSFPSKVKPGDIIIAGRNFGCGSSREHAPIAIKASGIRAVIAKSYARIFFRNAFNIGLPIFEVPELIDETNEGDEVEIDMNSGQIINLTKGKKYNTKPIPPFMQELIKAGGLVEWTKKRLSMEDIK</sequence>
<dbReference type="EC" id="4.2.1.33" evidence="1"/>
<dbReference type="EMBL" id="CP001147">
    <property type="protein sequence ID" value="ACI20179.1"/>
    <property type="molecule type" value="Genomic_DNA"/>
</dbReference>
<dbReference type="RefSeq" id="WP_012544917.1">
    <property type="nucleotide sequence ID" value="NC_011296.1"/>
</dbReference>
<dbReference type="RefSeq" id="YP_002247967.1">
    <property type="nucleotide sequence ID" value="NC_011296.1"/>
</dbReference>
<dbReference type="SMR" id="B5YHE5"/>
<dbReference type="FunCoup" id="B5YHE5">
    <property type="interactions" value="466"/>
</dbReference>
<dbReference type="STRING" id="289376.THEYE_A0115"/>
<dbReference type="EnsemblBacteria" id="ACI20179">
    <property type="protein sequence ID" value="ACI20179"/>
    <property type="gene ID" value="THEYE_A0115"/>
</dbReference>
<dbReference type="KEGG" id="tye:THEYE_A0115"/>
<dbReference type="PATRIC" id="fig|289376.4.peg.113"/>
<dbReference type="eggNOG" id="COG0066">
    <property type="taxonomic scope" value="Bacteria"/>
</dbReference>
<dbReference type="HOGENOM" id="CLU_081378_1_1_0"/>
<dbReference type="InParanoid" id="B5YHE5"/>
<dbReference type="OrthoDB" id="9777465at2"/>
<dbReference type="UniPathway" id="UPA00048">
    <property type="reaction ID" value="UER00071"/>
</dbReference>
<dbReference type="Proteomes" id="UP000000718">
    <property type="component" value="Chromosome"/>
</dbReference>
<dbReference type="GO" id="GO:0003861">
    <property type="term" value="F:3-isopropylmalate dehydratase activity"/>
    <property type="evidence" value="ECO:0007669"/>
    <property type="project" value="UniProtKB-UniRule"/>
</dbReference>
<dbReference type="GO" id="GO:0009098">
    <property type="term" value="P:L-leucine biosynthetic process"/>
    <property type="evidence" value="ECO:0007669"/>
    <property type="project" value="UniProtKB-UniRule"/>
</dbReference>
<dbReference type="CDD" id="cd01577">
    <property type="entry name" value="IPMI_Swivel"/>
    <property type="match status" value="1"/>
</dbReference>
<dbReference type="FunFam" id="3.20.19.10:FF:000007">
    <property type="entry name" value="Isopropylmalate/citramalate isomerase small subunit"/>
    <property type="match status" value="1"/>
</dbReference>
<dbReference type="Gene3D" id="3.20.19.10">
    <property type="entry name" value="Aconitase, domain 4"/>
    <property type="match status" value="1"/>
</dbReference>
<dbReference type="HAMAP" id="MF_01032">
    <property type="entry name" value="LeuD_type2"/>
    <property type="match status" value="1"/>
</dbReference>
<dbReference type="InterPro" id="IPR015928">
    <property type="entry name" value="Aconitase/3IPM_dehydase_swvl"/>
</dbReference>
<dbReference type="InterPro" id="IPR000573">
    <property type="entry name" value="AconitaseA/IPMdHydase_ssu_swvl"/>
</dbReference>
<dbReference type="InterPro" id="IPR033940">
    <property type="entry name" value="IPMI_Swivel"/>
</dbReference>
<dbReference type="InterPro" id="IPR050075">
    <property type="entry name" value="LeuD"/>
</dbReference>
<dbReference type="InterPro" id="IPR011824">
    <property type="entry name" value="LeuD/DmdB_bac"/>
</dbReference>
<dbReference type="InterPro" id="IPR011827">
    <property type="entry name" value="LeuD_type2/HacB/DmdB"/>
</dbReference>
<dbReference type="NCBIfam" id="TIGR02084">
    <property type="entry name" value="leud"/>
    <property type="match status" value="1"/>
</dbReference>
<dbReference type="NCBIfam" id="TIGR02087">
    <property type="entry name" value="LEUD_arch"/>
    <property type="match status" value="1"/>
</dbReference>
<dbReference type="PANTHER" id="PTHR43345:SF2">
    <property type="entry name" value="3-ISOPROPYLMALATE DEHYDRATASE SMALL SUBUNIT 1"/>
    <property type="match status" value="1"/>
</dbReference>
<dbReference type="PANTHER" id="PTHR43345">
    <property type="entry name" value="3-ISOPROPYLMALATE DEHYDRATASE SMALL SUBUNIT 2-RELATED-RELATED"/>
    <property type="match status" value="1"/>
</dbReference>
<dbReference type="Pfam" id="PF00694">
    <property type="entry name" value="Aconitase_C"/>
    <property type="match status" value="1"/>
</dbReference>
<dbReference type="SUPFAM" id="SSF52016">
    <property type="entry name" value="LeuD/IlvD-like"/>
    <property type="match status" value="1"/>
</dbReference>